<accession>Q9MDU0</accession>
<accession>A9IKQ8</accession>
<gene>
    <name type="primary">rpl2-A</name>
    <name type="synonym">rpl2-1</name>
</gene>
<gene>
    <name type="primary">rpl2-B</name>
    <name type="synonym">rpl2-2</name>
</gene>
<organism>
    <name type="scientific">Oenothera elata subsp. hookeri</name>
    <name type="common">Hooker's evening primrose</name>
    <name type="synonym">Oenothera hookeri</name>
    <dbReference type="NCBI Taxonomy" id="85636"/>
    <lineage>
        <taxon>Eukaryota</taxon>
        <taxon>Viridiplantae</taxon>
        <taxon>Streptophyta</taxon>
        <taxon>Embryophyta</taxon>
        <taxon>Tracheophyta</taxon>
        <taxon>Spermatophyta</taxon>
        <taxon>Magnoliopsida</taxon>
        <taxon>eudicotyledons</taxon>
        <taxon>Gunneridae</taxon>
        <taxon>Pentapetalae</taxon>
        <taxon>rosids</taxon>
        <taxon>malvids</taxon>
        <taxon>Myrtales</taxon>
        <taxon>Onagraceae</taxon>
        <taxon>Onagroideae</taxon>
        <taxon>Onagreae</taxon>
        <taxon>Oenothera</taxon>
    </lineage>
</organism>
<comment type="subunit">
    <text evidence="1">Part of the 50S ribosomal subunit.</text>
</comment>
<comment type="subcellular location">
    <subcellularLocation>
        <location>Plastid</location>
        <location>Chloroplast</location>
    </subcellularLocation>
</comment>
<comment type="similarity">
    <text evidence="4">Belongs to the universal ribosomal protein uL2 family.</text>
</comment>
<dbReference type="EMBL" id="AJ271079">
    <property type="protein sequence ID" value="CAP58405.1"/>
    <property type="molecule type" value="Genomic_DNA"/>
</dbReference>
<dbReference type="EMBL" id="AJ271079">
    <property type="protein sequence ID" value="CAP58414.1"/>
    <property type="molecule type" value="Genomic_DNA"/>
</dbReference>
<dbReference type="SMR" id="Q9MDU0"/>
<dbReference type="GO" id="GO:0009507">
    <property type="term" value="C:chloroplast"/>
    <property type="evidence" value="ECO:0007669"/>
    <property type="project" value="UniProtKB-SubCell"/>
</dbReference>
<dbReference type="GO" id="GO:0005762">
    <property type="term" value="C:mitochondrial large ribosomal subunit"/>
    <property type="evidence" value="ECO:0007669"/>
    <property type="project" value="TreeGrafter"/>
</dbReference>
<dbReference type="GO" id="GO:0019843">
    <property type="term" value="F:rRNA binding"/>
    <property type="evidence" value="ECO:0007669"/>
    <property type="project" value="UniProtKB-UniRule"/>
</dbReference>
<dbReference type="GO" id="GO:0003735">
    <property type="term" value="F:structural constituent of ribosome"/>
    <property type="evidence" value="ECO:0007669"/>
    <property type="project" value="InterPro"/>
</dbReference>
<dbReference type="GO" id="GO:0016740">
    <property type="term" value="F:transferase activity"/>
    <property type="evidence" value="ECO:0007669"/>
    <property type="project" value="InterPro"/>
</dbReference>
<dbReference type="GO" id="GO:0032543">
    <property type="term" value="P:mitochondrial translation"/>
    <property type="evidence" value="ECO:0007669"/>
    <property type="project" value="TreeGrafter"/>
</dbReference>
<dbReference type="FunFam" id="4.10.950.10:FF:000001">
    <property type="entry name" value="50S ribosomal protein L2"/>
    <property type="match status" value="1"/>
</dbReference>
<dbReference type="FunFam" id="2.30.30.30:FF:000008">
    <property type="entry name" value="50S ribosomal protein L2, chloroplastic"/>
    <property type="match status" value="1"/>
</dbReference>
<dbReference type="FunFam" id="2.40.50.140:FF:000029">
    <property type="entry name" value="50S ribosomal protein L2, chloroplastic"/>
    <property type="match status" value="1"/>
</dbReference>
<dbReference type="Gene3D" id="2.30.30.30">
    <property type="match status" value="1"/>
</dbReference>
<dbReference type="Gene3D" id="2.40.50.140">
    <property type="entry name" value="Nucleic acid-binding proteins"/>
    <property type="match status" value="1"/>
</dbReference>
<dbReference type="Gene3D" id="4.10.950.10">
    <property type="entry name" value="Ribosomal protein L2, domain 3"/>
    <property type="match status" value="1"/>
</dbReference>
<dbReference type="HAMAP" id="MF_01320_B">
    <property type="entry name" value="Ribosomal_uL2_B"/>
    <property type="match status" value="1"/>
</dbReference>
<dbReference type="InterPro" id="IPR012340">
    <property type="entry name" value="NA-bd_OB-fold"/>
</dbReference>
<dbReference type="InterPro" id="IPR014722">
    <property type="entry name" value="Rib_uL2_dom2"/>
</dbReference>
<dbReference type="InterPro" id="IPR002171">
    <property type="entry name" value="Ribosomal_uL2"/>
</dbReference>
<dbReference type="InterPro" id="IPR005880">
    <property type="entry name" value="Ribosomal_uL2_bac/org-type"/>
</dbReference>
<dbReference type="InterPro" id="IPR022669">
    <property type="entry name" value="Ribosomal_uL2_C"/>
</dbReference>
<dbReference type="InterPro" id="IPR022671">
    <property type="entry name" value="Ribosomal_uL2_CS"/>
</dbReference>
<dbReference type="InterPro" id="IPR014726">
    <property type="entry name" value="Ribosomal_uL2_dom3"/>
</dbReference>
<dbReference type="InterPro" id="IPR022666">
    <property type="entry name" value="Ribosomal_uL2_RNA-bd_dom"/>
</dbReference>
<dbReference type="InterPro" id="IPR008991">
    <property type="entry name" value="Translation_prot_SH3-like_sf"/>
</dbReference>
<dbReference type="NCBIfam" id="TIGR01171">
    <property type="entry name" value="rplB_bact"/>
    <property type="match status" value="1"/>
</dbReference>
<dbReference type="PANTHER" id="PTHR13691:SF5">
    <property type="entry name" value="LARGE RIBOSOMAL SUBUNIT PROTEIN UL2M"/>
    <property type="match status" value="1"/>
</dbReference>
<dbReference type="PANTHER" id="PTHR13691">
    <property type="entry name" value="RIBOSOMAL PROTEIN L2"/>
    <property type="match status" value="1"/>
</dbReference>
<dbReference type="Pfam" id="PF00181">
    <property type="entry name" value="Ribosomal_L2"/>
    <property type="match status" value="1"/>
</dbReference>
<dbReference type="Pfam" id="PF03947">
    <property type="entry name" value="Ribosomal_L2_C"/>
    <property type="match status" value="1"/>
</dbReference>
<dbReference type="PIRSF" id="PIRSF002158">
    <property type="entry name" value="Ribosomal_L2"/>
    <property type="match status" value="1"/>
</dbReference>
<dbReference type="SMART" id="SM01383">
    <property type="entry name" value="Ribosomal_L2"/>
    <property type="match status" value="1"/>
</dbReference>
<dbReference type="SMART" id="SM01382">
    <property type="entry name" value="Ribosomal_L2_C"/>
    <property type="match status" value="1"/>
</dbReference>
<dbReference type="SUPFAM" id="SSF50249">
    <property type="entry name" value="Nucleic acid-binding proteins"/>
    <property type="match status" value="1"/>
</dbReference>
<dbReference type="SUPFAM" id="SSF50104">
    <property type="entry name" value="Translation proteins SH3-like domain"/>
    <property type="match status" value="1"/>
</dbReference>
<dbReference type="PROSITE" id="PS00467">
    <property type="entry name" value="RIBOSOMAL_L2"/>
    <property type="match status" value="1"/>
</dbReference>
<geneLocation type="chloroplast"/>
<proteinExistence type="inferred from homology"/>
<keyword id="KW-0150">Chloroplast</keyword>
<keyword id="KW-0934">Plastid</keyword>
<keyword id="KW-0687">Ribonucleoprotein</keyword>
<keyword id="KW-0689">Ribosomal protein</keyword>
<evidence type="ECO:0000250" key="1"/>
<evidence type="ECO:0000255" key="2">
    <source>
        <dbReference type="HAMAP-Rule" id="MF_01320"/>
    </source>
</evidence>
<evidence type="ECO:0000256" key="3">
    <source>
        <dbReference type="SAM" id="MobiDB-lite"/>
    </source>
</evidence>
<evidence type="ECO:0000305" key="4"/>
<sequence>MAIHLYKTSTPSTRNGAVDSQVKSNTRKNLIYGQPRCSKGRNARGIITAGHRGGGHKRLYRKIDFRRNERDIYGRIVSIEYDPNRNASICLIHYGDGEKRYILHPRGAIIGDTIVSGTEVPIKMGNALPLKMPLGTALHNIEITLGKGGQLARAAGAVAKLIAKEGKSATLKLPSGEVRLISNNCSATVGQVGNVGVNQKSLGRAGSKRWLGKRPVVRGVVMNPVDHPHGGGEGRAPIGRKKPATPWGYPALGRRSRKRNKYSENLILRRRSK</sequence>
<reference key="1">
    <citation type="journal article" date="2000" name="Mol. Gen. Genet.">
        <title>Complete nucleotide sequence of the Oenothera elata plastid chromosome, representing plastome I of the five distinguishable Euoenothera plastomes.</title>
        <authorList>
            <person name="Hupfer H."/>
            <person name="Swiatek M."/>
            <person name="Hornung S."/>
            <person name="Herrmann R.G."/>
            <person name="Maier R.M."/>
            <person name="Chiu W.-L."/>
            <person name="Sears B."/>
        </authorList>
    </citation>
    <scope>NUCLEOTIDE SEQUENCE [LARGE SCALE GENOMIC DNA]</scope>
    <source>
        <strain>cv. Johansen</strain>
    </source>
</reference>
<reference key="2">
    <citation type="journal article" date="2008" name="Nucleic Acids Res.">
        <title>The complete nucleotide sequences of the five genetically distinct plastid genomes of Oenothera, subsection Oenothera: I. Sequence evaluation and plastome evolution.</title>
        <authorList>
            <person name="Greiner S."/>
            <person name="Wang X."/>
            <person name="Rauwolf U."/>
            <person name="Silber M.V."/>
            <person name="Mayer K."/>
            <person name="Meurer J."/>
            <person name="Haberer G."/>
            <person name="Herrmann R.G."/>
        </authorList>
    </citation>
    <scope>SEQUENCE REVISION TO 3; 131-132; 144; 224; 237; 250 AND 273</scope>
</reference>
<protein>
    <recommendedName>
        <fullName evidence="2">Large ribosomal subunit protein uL2cz/uL2cy</fullName>
    </recommendedName>
    <alternativeName>
        <fullName evidence="4">50S ribosomal protein L2, chloroplastic</fullName>
    </alternativeName>
</protein>
<name>RK2_OENEH</name>
<feature type="chain" id="PRO_0000129688" description="Large ribosomal subunit protein uL2cz/uL2cy">
    <location>
        <begin position="1"/>
        <end position="273"/>
    </location>
</feature>
<feature type="region of interest" description="Disordered" evidence="3">
    <location>
        <begin position="1"/>
        <end position="23"/>
    </location>
</feature>
<feature type="region of interest" description="Disordered" evidence="3">
    <location>
        <begin position="223"/>
        <end position="273"/>
    </location>
</feature>